<sequence length="127" mass="13411">MSWQAYVDTSLLGTGKIDRAAIVSRAGDSVWAASAGFNLSPQEIQGLAAGFQDPPSMFGTGIILAGQKYITIRAEGRSIYGKLQKEGIICVATKLCILVSHYPETTLPGEAAKITEALADYLVGVGY</sequence>
<comment type="function">
    <text>Binds to actin and affects the structure of the cytoskeleton. At high concentrations, profilin prevents the polymerization of actin, whereas it enhances it at low concentrations. By binding to PIP2, it inhibits the formation of IP3 and DG. In S.pombe, it is essential for cytokinesis.</text>
</comment>
<comment type="subunit">
    <text>Occurs in many kinds of cells as a complex with monomeric actin in a 1:1 ratio.</text>
</comment>
<comment type="subcellular location">
    <subcellularLocation>
        <location>Cytoplasm</location>
        <location>Cytoskeleton</location>
    </subcellularLocation>
</comment>
<comment type="similarity">
    <text evidence="1">Belongs to the profilin family.</text>
</comment>
<organism>
    <name type="scientific">Schizosaccharomyces pombe (strain 972 / ATCC 24843)</name>
    <name type="common">Fission yeast</name>
    <dbReference type="NCBI Taxonomy" id="284812"/>
    <lineage>
        <taxon>Eukaryota</taxon>
        <taxon>Fungi</taxon>
        <taxon>Dikarya</taxon>
        <taxon>Ascomycota</taxon>
        <taxon>Taphrinomycotina</taxon>
        <taxon>Schizosaccharomycetes</taxon>
        <taxon>Schizosaccharomycetales</taxon>
        <taxon>Schizosaccharomycetaceae</taxon>
        <taxon>Schizosaccharomyces</taxon>
    </lineage>
</organism>
<reference key="1">
    <citation type="journal article" date="1994" name="J. Cell Biol.">
        <title>The Schizosaccharomyces pombe cdc3+ gene encodes a profilin essential for cytokinesis.</title>
        <authorList>
            <person name="Balasubramanian M.K."/>
            <person name="Hirani B.R."/>
            <person name="Burke J.D."/>
            <person name="Gould K.L."/>
        </authorList>
    </citation>
    <scope>NUCLEOTIDE SEQUENCE [GENOMIC DNA]</scope>
    <source>
        <strain>972 / ATCC 24843</strain>
    </source>
</reference>
<reference key="2">
    <citation type="journal article" date="2002" name="Nature">
        <title>The genome sequence of Schizosaccharomyces pombe.</title>
        <authorList>
            <person name="Wood V."/>
            <person name="Gwilliam R."/>
            <person name="Rajandream M.A."/>
            <person name="Lyne M.H."/>
            <person name="Lyne R."/>
            <person name="Stewart A."/>
            <person name="Sgouros J.G."/>
            <person name="Peat N."/>
            <person name="Hayles J."/>
            <person name="Baker S.G."/>
            <person name="Basham D."/>
            <person name="Bowman S."/>
            <person name="Brooks K."/>
            <person name="Brown D."/>
            <person name="Brown S."/>
            <person name="Chillingworth T."/>
            <person name="Churcher C.M."/>
            <person name="Collins M."/>
            <person name="Connor R."/>
            <person name="Cronin A."/>
            <person name="Davis P."/>
            <person name="Feltwell T."/>
            <person name="Fraser A."/>
            <person name="Gentles S."/>
            <person name="Goble A."/>
            <person name="Hamlin N."/>
            <person name="Harris D.E."/>
            <person name="Hidalgo J."/>
            <person name="Hodgson G."/>
            <person name="Holroyd S."/>
            <person name="Hornsby T."/>
            <person name="Howarth S."/>
            <person name="Huckle E.J."/>
            <person name="Hunt S."/>
            <person name="Jagels K."/>
            <person name="James K.D."/>
            <person name="Jones L."/>
            <person name="Jones M."/>
            <person name="Leather S."/>
            <person name="McDonald S."/>
            <person name="McLean J."/>
            <person name="Mooney P."/>
            <person name="Moule S."/>
            <person name="Mungall K.L."/>
            <person name="Murphy L.D."/>
            <person name="Niblett D."/>
            <person name="Odell C."/>
            <person name="Oliver K."/>
            <person name="O'Neil S."/>
            <person name="Pearson D."/>
            <person name="Quail M.A."/>
            <person name="Rabbinowitsch E."/>
            <person name="Rutherford K.M."/>
            <person name="Rutter S."/>
            <person name="Saunders D."/>
            <person name="Seeger K."/>
            <person name="Sharp S."/>
            <person name="Skelton J."/>
            <person name="Simmonds M.N."/>
            <person name="Squares R."/>
            <person name="Squares S."/>
            <person name="Stevens K."/>
            <person name="Taylor K."/>
            <person name="Taylor R.G."/>
            <person name="Tivey A."/>
            <person name="Walsh S.V."/>
            <person name="Warren T."/>
            <person name="Whitehead S."/>
            <person name="Woodward J.R."/>
            <person name="Volckaert G."/>
            <person name="Aert R."/>
            <person name="Robben J."/>
            <person name="Grymonprez B."/>
            <person name="Weltjens I."/>
            <person name="Vanstreels E."/>
            <person name="Rieger M."/>
            <person name="Schaefer M."/>
            <person name="Mueller-Auer S."/>
            <person name="Gabel C."/>
            <person name="Fuchs M."/>
            <person name="Duesterhoeft A."/>
            <person name="Fritzc C."/>
            <person name="Holzer E."/>
            <person name="Moestl D."/>
            <person name="Hilbert H."/>
            <person name="Borzym K."/>
            <person name="Langer I."/>
            <person name="Beck A."/>
            <person name="Lehrach H."/>
            <person name="Reinhardt R."/>
            <person name="Pohl T.M."/>
            <person name="Eger P."/>
            <person name="Zimmermann W."/>
            <person name="Wedler H."/>
            <person name="Wambutt R."/>
            <person name="Purnelle B."/>
            <person name="Goffeau A."/>
            <person name="Cadieu E."/>
            <person name="Dreano S."/>
            <person name="Gloux S."/>
            <person name="Lelaure V."/>
            <person name="Mottier S."/>
            <person name="Galibert F."/>
            <person name="Aves S.J."/>
            <person name="Xiang Z."/>
            <person name="Hunt C."/>
            <person name="Moore K."/>
            <person name="Hurst S.M."/>
            <person name="Lucas M."/>
            <person name="Rochet M."/>
            <person name="Gaillardin C."/>
            <person name="Tallada V.A."/>
            <person name="Garzon A."/>
            <person name="Thode G."/>
            <person name="Daga R.R."/>
            <person name="Cruzado L."/>
            <person name="Jimenez J."/>
            <person name="Sanchez M."/>
            <person name="del Rey F."/>
            <person name="Benito J."/>
            <person name="Dominguez A."/>
            <person name="Revuelta J.L."/>
            <person name="Moreno S."/>
            <person name="Armstrong J."/>
            <person name="Forsburg S.L."/>
            <person name="Cerutti L."/>
            <person name="Lowe T."/>
            <person name="McCombie W.R."/>
            <person name="Paulsen I."/>
            <person name="Potashkin J."/>
            <person name="Shpakovski G.V."/>
            <person name="Ussery D."/>
            <person name="Barrell B.G."/>
            <person name="Nurse P."/>
        </authorList>
    </citation>
    <scope>NUCLEOTIDE SEQUENCE [LARGE SCALE GENOMIC DNA]</scope>
    <source>
        <strain>972 / ATCC 24843</strain>
    </source>
</reference>
<proteinExistence type="evidence at protein level"/>
<accession>P39825</accession>
<dbReference type="EMBL" id="Z30648">
    <property type="status" value="NOT_ANNOTATED_CDS"/>
    <property type="molecule type" value="Genomic_DNA"/>
</dbReference>
<dbReference type="EMBL" id="CU329670">
    <property type="protein sequence ID" value="CAB38578.1"/>
    <property type="molecule type" value="Genomic_DNA"/>
</dbReference>
<dbReference type="PIR" id="A53952">
    <property type="entry name" value="A53952"/>
</dbReference>
<dbReference type="RefSeq" id="NP_593827.1">
    <property type="nucleotide sequence ID" value="NM_001019256.2"/>
</dbReference>
<dbReference type="PDB" id="3D9Y">
    <property type="method" value="X-ray"/>
    <property type="resolution" value="1.65 A"/>
    <property type="chains" value="A/B=1-127"/>
</dbReference>
<dbReference type="PDB" id="3DAV">
    <property type="method" value="X-ray"/>
    <property type="resolution" value="2.20 A"/>
    <property type="chains" value="A/B=1-127"/>
</dbReference>
<dbReference type="PDBsum" id="3D9Y"/>
<dbReference type="PDBsum" id="3DAV"/>
<dbReference type="SMR" id="P39825"/>
<dbReference type="BioGRID" id="279944">
    <property type="interactions" value="25"/>
</dbReference>
<dbReference type="FunCoup" id="P39825">
    <property type="interactions" value="169"/>
</dbReference>
<dbReference type="STRING" id="284812.P39825"/>
<dbReference type="iPTMnet" id="P39825"/>
<dbReference type="PaxDb" id="4896-SPAC4A8.15c.1"/>
<dbReference type="EnsemblFungi" id="SPAC4A8.15c.1">
    <property type="protein sequence ID" value="SPAC4A8.15c.1:pep"/>
    <property type="gene ID" value="SPAC4A8.15c"/>
</dbReference>
<dbReference type="GeneID" id="2543526"/>
<dbReference type="KEGG" id="spo:2543526"/>
<dbReference type="PomBase" id="SPAC4A8.15c">
    <property type="gene designation" value="cdc3"/>
</dbReference>
<dbReference type="VEuPathDB" id="FungiDB:SPAC4A8.15c"/>
<dbReference type="eggNOG" id="KOG1755">
    <property type="taxonomic scope" value="Eukaryota"/>
</dbReference>
<dbReference type="HOGENOM" id="CLU_120772_1_0_1"/>
<dbReference type="InParanoid" id="P39825"/>
<dbReference type="OMA" id="QGQKFML"/>
<dbReference type="PhylomeDB" id="P39825"/>
<dbReference type="EvolutionaryTrace" id="P39825"/>
<dbReference type="PRO" id="PR:P39825"/>
<dbReference type="Proteomes" id="UP000002485">
    <property type="component" value="Chromosome I"/>
</dbReference>
<dbReference type="GO" id="GO:0030479">
    <property type="term" value="C:actin cortical patch"/>
    <property type="evidence" value="ECO:0000304"/>
    <property type="project" value="PomBase"/>
</dbReference>
<dbReference type="GO" id="GO:0005938">
    <property type="term" value="C:cell cortex"/>
    <property type="evidence" value="ECO:0000318"/>
    <property type="project" value="GO_Central"/>
</dbReference>
<dbReference type="GO" id="GO:0051285">
    <property type="term" value="C:cell cortex of cell tip"/>
    <property type="evidence" value="ECO:0000314"/>
    <property type="project" value="PomBase"/>
</dbReference>
<dbReference type="GO" id="GO:0043332">
    <property type="term" value="C:mating projection tip"/>
    <property type="evidence" value="ECO:0000314"/>
    <property type="project" value="PomBase"/>
</dbReference>
<dbReference type="GO" id="GO:0031097">
    <property type="term" value="C:medial cortex"/>
    <property type="evidence" value="ECO:0000314"/>
    <property type="project" value="PomBase"/>
</dbReference>
<dbReference type="GO" id="GO:0003785">
    <property type="term" value="F:actin monomer binding"/>
    <property type="evidence" value="ECO:0000314"/>
    <property type="project" value="PomBase"/>
</dbReference>
<dbReference type="GO" id="GO:0005085">
    <property type="term" value="F:guanyl-nucleotide exchange factor activity"/>
    <property type="evidence" value="ECO:0000314"/>
    <property type="project" value="PomBase"/>
</dbReference>
<dbReference type="GO" id="GO:0044396">
    <property type="term" value="P:actin cortical patch organization"/>
    <property type="evidence" value="ECO:0000315"/>
    <property type="project" value="PomBase"/>
</dbReference>
<dbReference type="GO" id="GO:0030041">
    <property type="term" value="P:actin filament polymerization"/>
    <property type="evidence" value="ECO:0000314"/>
    <property type="project" value="PomBase"/>
</dbReference>
<dbReference type="GO" id="GO:0000755">
    <property type="term" value="P:cytogamy"/>
    <property type="evidence" value="ECO:0000315"/>
    <property type="project" value="PomBase"/>
</dbReference>
<dbReference type="GO" id="GO:1903475">
    <property type="term" value="P:mitotic actomyosin contractile ring assembly"/>
    <property type="evidence" value="ECO:0000315"/>
    <property type="project" value="PomBase"/>
</dbReference>
<dbReference type="CDD" id="cd00148">
    <property type="entry name" value="PROF"/>
    <property type="match status" value="1"/>
</dbReference>
<dbReference type="FunFam" id="3.30.450.30:FF:000001">
    <property type="entry name" value="Profilin"/>
    <property type="match status" value="1"/>
</dbReference>
<dbReference type="Gene3D" id="3.30.450.30">
    <property type="entry name" value="Dynein light chain 2a, cytoplasmic"/>
    <property type="match status" value="1"/>
</dbReference>
<dbReference type="InterPro" id="IPR048278">
    <property type="entry name" value="PFN"/>
</dbReference>
<dbReference type="InterPro" id="IPR005455">
    <property type="entry name" value="PFN_euk"/>
</dbReference>
<dbReference type="InterPro" id="IPR036140">
    <property type="entry name" value="PFN_sf"/>
</dbReference>
<dbReference type="InterPro" id="IPR027310">
    <property type="entry name" value="Profilin_CS"/>
</dbReference>
<dbReference type="PANTHER" id="PTHR11604">
    <property type="entry name" value="PROFILIN"/>
    <property type="match status" value="1"/>
</dbReference>
<dbReference type="PANTHER" id="PTHR11604:SF0">
    <property type="entry name" value="PROFILIN"/>
    <property type="match status" value="1"/>
</dbReference>
<dbReference type="Pfam" id="PF00235">
    <property type="entry name" value="Profilin"/>
    <property type="match status" value="1"/>
</dbReference>
<dbReference type="PRINTS" id="PR00392">
    <property type="entry name" value="PROFILIN"/>
</dbReference>
<dbReference type="PRINTS" id="PR01640">
    <property type="entry name" value="PROFILINPLNT"/>
</dbReference>
<dbReference type="SMART" id="SM00392">
    <property type="entry name" value="PROF"/>
    <property type="match status" value="1"/>
</dbReference>
<dbReference type="SUPFAM" id="SSF55770">
    <property type="entry name" value="Profilin (actin-binding protein)"/>
    <property type="match status" value="1"/>
</dbReference>
<dbReference type="PROSITE" id="PS00414">
    <property type="entry name" value="PROFILIN"/>
    <property type="match status" value="1"/>
</dbReference>
<name>PROF_SCHPO</name>
<protein>
    <recommendedName>
        <fullName>Profilin</fullName>
    </recommendedName>
</protein>
<evidence type="ECO:0000305" key="1"/>
<evidence type="ECO:0007829" key="2">
    <source>
        <dbReference type="PDB" id="3D9Y"/>
    </source>
</evidence>
<keyword id="KW-0002">3D-structure</keyword>
<keyword id="KW-0009">Actin-binding</keyword>
<keyword id="KW-0963">Cytoplasm</keyword>
<keyword id="KW-0206">Cytoskeleton</keyword>
<keyword id="KW-1185">Reference proteome</keyword>
<gene>
    <name type="primary">cdc3</name>
    <name type="ORF">SPAC4A8.15c</name>
</gene>
<feature type="chain" id="PRO_0000199607" description="Profilin">
    <location>
        <begin position="1"/>
        <end position="127"/>
    </location>
</feature>
<feature type="helix" evidence="2">
    <location>
        <begin position="3"/>
        <end position="8"/>
    </location>
</feature>
<feature type="turn" evidence="2">
    <location>
        <begin position="9"/>
        <end position="11"/>
    </location>
</feature>
<feature type="helix" evidence="2">
    <location>
        <begin position="12"/>
        <end position="14"/>
    </location>
</feature>
<feature type="strand" evidence="2">
    <location>
        <begin position="19"/>
        <end position="24"/>
    </location>
</feature>
<feature type="strand" evidence="2">
    <location>
        <begin position="30"/>
        <end position="33"/>
    </location>
</feature>
<feature type="helix" evidence="2">
    <location>
        <begin position="41"/>
        <end position="52"/>
    </location>
</feature>
<feature type="helix" evidence="2">
    <location>
        <begin position="56"/>
        <end position="60"/>
    </location>
</feature>
<feature type="strand" evidence="2">
    <location>
        <begin position="62"/>
        <end position="64"/>
    </location>
</feature>
<feature type="strand" evidence="2">
    <location>
        <begin position="67"/>
        <end position="74"/>
    </location>
</feature>
<feature type="strand" evidence="2">
    <location>
        <begin position="76"/>
        <end position="83"/>
    </location>
</feature>
<feature type="strand" evidence="2">
    <location>
        <begin position="86"/>
        <end position="92"/>
    </location>
</feature>
<feature type="strand" evidence="2">
    <location>
        <begin position="94"/>
        <end position="102"/>
    </location>
</feature>
<feature type="helix" evidence="2">
    <location>
        <begin position="108"/>
        <end position="125"/>
    </location>
</feature>